<protein>
    <recommendedName>
        <fullName evidence="1">UPF0102 protein CFF8240_0294</fullName>
    </recommendedName>
</protein>
<reference key="1">
    <citation type="submission" date="2006-11" db="EMBL/GenBank/DDBJ databases">
        <title>Sequence of Campylobacter fetus subsp. fetus 82-40.</title>
        <authorList>
            <person name="Fouts D.E."/>
            <person name="Nelson K.E."/>
        </authorList>
    </citation>
    <scope>NUCLEOTIDE SEQUENCE [LARGE SCALE GENOMIC DNA]</scope>
    <source>
        <strain>82-40</strain>
    </source>
</reference>
<dbReference type="EMBL" id="CP000487">
    <property type="protein sequence ID" value="ABK83023.1"/>
    <property type="molecule type" value="Genomic_DNA"/>
</dbReference>
<dbReference type="RefSeq" id="WP_002848396.1">
    <property type="nucleotide sequence ID" value="NC_008599.1"/>
</dbReference>
<dbReference type="SMR" id="A0RMR3"/>
<dbReference type="KEGG" id="cff:CFF8240_0294"/>
<dbReference type="PATRIC" id="fig|360106.6.peg.289"/>
<dbReference type="eggNOG" id="COG0792">
    <property type="taxonomic scope" value="Bacteria"/>
</dbReference>
<dbReference type="HOGENOM" id="CLU_115353_3_2_7"/>
<dbReference type="Proteomes" id="UP000000760">
    <property type="component" value="Chromosome"/>
</dbReference>
<dbReference type="GO" id="GO:0003676">
    <property type="term" value="F:nucleic acid binding"/>
    <property type="evidence" value="ECO:0007669"/>
    <property type="project" value="InterPro"/>
</dbReference>
<dbReference type="Gene3D" id="3.40.1350.10">
    <property type="match status" value="1"/>
</dbReference>
<dbReference type="HAMAP" id="MF_00048">
    <property type="entry name" value="UPF0102"/>
    <property type="match status" value="1"/>
</dbReference>
<dbReference type="InterPro" id="IPR011335">
    <property type="entry name" value="Restrct_endonuc-II-like"/>
</dbReference>
<dbReference type="InterPro" id="IPR011856">
    <property type="entry name" value="tRNA_endonuc-like_dom_sf"/>
</dbReference>
<dbReference type="InterPro" id="IPR003509">
    <property type="entry name" value="UPF0102_YraN-like"/>
</dbReference>
<dbReference type="NCBIfam" id="NF009152">
    <property type="entry name" value="PRK12497.2-4"/>
    <property type="match status" value="1"/>
</dbReference>
<dbReference type="PANTHER" id="PTHR34039">
    <property type="entry name" value="UPF0102 PROTEIN YRAN"/>
    <property type="match status" value="1"/>
</dbReference>
<dbReference type="PANTHER" id="PTHR34039:SF1">
    <property type="entry name" value="UPF0102 PROTEIN YRAN"/>
    <property type="match status" value="1"/>
</dbReference>
<dbReference type="Pfam" id="PF02021">
    <property type="entry name" value="UPF0102"/>
    <property type="match status" value="1"/>
</dbReference>
<dbReference type="SUPFAM" id="SSF52980">
    <property type="entry name" value="Restriction endonuclease-like"/>
    <property type="match status" value="1"/>
</dbReference>
<sequence length="112" mass="13331">MGLKEYLFGFKGENMAAKYLVSQGFEILEKNFHSKFGEIDIIAKKDDVLHFVEVKSTSKDYETIYRVTQNKIYKIIKTINFYMLKYDFDLNYQIDIICIEQNKVKFIQNVSF</sequence>
<accession>A0RMR3</accession>
<name>Y294_CAMFF</name>
<comment type="similarity">
    <text evidence="1">Belongs to the UPF0102 family.</text>
</comment>
<evidence type="ECO:0000255" key="1">
    <source>
        <dbReference type="HAMAP-Rule" id="MF_00048"/>
    </source>
</evidence>
<gene>
    <name type="ordered locus">CFF8240_0294</name>
</gene>
<feature type="chain" id="PRO_1000009195" description="UPF0102 protein CFF8240_0294">
    <location>
        <begin position="1"/>
        <end position="112"/>
    </location>
</feature>
<organism>
    <name type="scientific">Campylobacter fetus subsp. fetus (strain 82-40)</name>
    <dbReference type="NCBI Taxonomy" id="360106"/>
    <lineage>
        <taxon>Bacteria</taxon>
        <taxon>Pseudomonadati</taxon>
        <taxon>Campylobacterota</taxon>
        <taxon>Epsilonproteobacteria</taxon>
        <taxon>Campylobacterales</taxon>
        <taxon>Campylobacteraceae</taxon>
        <taxon>Campylobacter</taxon>
    </lineage>
</organism>
<proteinExistence type="inferred from homology"/>